<organism>
    <name type="scientific">Trichormus variabilis (strain ATCC 29413 / PCC 7937)</name>
    <name type="common">Anabaena variabilis</name>
    <dbReference type="NCBI Taxonomy" id="240292"/>
    <lineage>
        <taxon>Bacteria</taxon>
        <taxon>Bacillati</taxon>
        <taxon>Cyanobacteriota</taxon>
        <taxon>Cyanophyceae</taxon>
        <taxon>Nostocales</taxon>
        <taxon>Nostocaceae</taxon>
        <taxon>Trichormus</taxon>
    </lineage>
</organism>
<name>PURT_TRIV2</name>
<sequence length="391" mass="42833">MSKAIKLPQKLMLLGSGELGKEFVIAAQRLGNYVIAVDRYANAPAMQVADFCEVISMLSADDLEAVVTKYQPDFIIPEIEAIRTEKLQEFEDRGITVIPTAAATNYTMNRDRIRELAHEELGIRTAKYGYAITLEELIAVSDEIGFPNVVKPVMSSSGKGQSVVATKEEVEKAWNYAIANSRGDSQKVIVEEFINFEIEITLLTIKQWDSPTIFCSPIGHRQERGDYQESWQPAGISEDKILEAQAIAKKVTDALGGAGIFGVEFFITKDEVIFSELSPRPHDTGMVTLISQNLNEFELHLRAILGLPIPKIEQLGPSASAVILASEKLDAPVFTGIAEALAAPDVDIRLFGKPTAHPYRRMGVALAKAENVQAAREKATDAASKIQISSQ</sequence>
<reference key="1">
    <citation type="journal article" date="2014" name="Stand. Genomic Sci.">
        <title>Complete genome sequence of Anabaena variabilis ATCC 29413.</title>
        <authorList>
            <person name="Thiel T."/>
            <person name="Pratte B.S."/>
            <person name="Zhong J."/>
            <person name="Goodwin L."/>
            <person name="Copeland A."/>
            <person name="Lucas S."/>
            <person name="Han C."/>
            <person name="Pitluck S."/>
            <person name="Land M.L."/>
            <person name="Kyrpides N.C."/>
            <person name="Woyke T."/>
        </authorList>
    </citation>
    <scope>NUCLEOTIDE SEQUENCE [LARGE SCALE GENOMIC DNA]</scope>
    <source>
        <strain>ATCC 29413 / PCC 7937</strain>
    </source>
</reference>
<dbReference type="EC" id="6.3.1.21" evidence="1"/>
<dbReference type="EMBL" id="CP000117">
    <property type="protein sequence ID" value="ABA22632.1"/>
    <property type="molecule type" value="Genomic_DNA"/>
</dbReference>
<dbReference type="SMR" id="Q3M8Q4"/>
<dbReference type="STRING" id="240292.Ava_3022"/>
<dbReference type="KEGG" id="ava:Ava_3022"/>
<dbReference type="eggNOG" id="COG0027">
    <property type="taxonomic scope" value="Bacteria"/>
</dbReference>
<dbReference type="HOGENOM" id="CLU_011534_1_3_3"/>
<dbReference type="UniPathway" id="UPA00074">
    <property type="reaction ID" value="UER00127"/>
</dbReference>
<dbReference type="Proteomes" id="UP000002533">
    <property type="component" value="Chromosome"/>
</dbReference>
<dbReference type="GO" id="GO:0005829">
    <property type="term" value="C:cytosol"/>
    <property type="evidence" value="ECO:0007669"/>
    <property type="project" value="TreeGrafter"/>
</dbReference>
<dbReference type="GO" id="GO:0005524">
    <property type="term" value="F:ATP binding"/>
    <property type="evidence" value="ECO:0007669"/>
    <property type="project" value="UniProtKB-UniRule"/>
</dbReference>
<dbReference type="GO" id="GO:0000287">
    <property type="term" value="F:magnesium ion binding"/>
    <property type="evidence" value="ECO:0007669"/>
    <property type="project" value="InterPro"/>
</dbReference>
<dbReference type="GO" id="GO:0043815">
    <property type="term" value="F:phosphoribosylglycinamide formyltransferase 2 activity"/>
    <property type="evidence" value="ECO:0007669"/>
    <property type="project" value="UniProtKB-UniRule"/>
</dbReference>
<dbReference type="GO" id="GO:0004644">
    <property type="term" value="F:phosphoribosylglycinamide formyltransferase activity"/>
    <property type="evidence" value="ECO:0007669"/>
    <property type="project" value="InterPro"/>
</dbReference>
<dbReference type="GO" id="GO:0006189">
    <property type="term" value="P:'de novo' IMP biosynthetic process"/>
    <property type="evidence" value="ECO:0007669"/>
    <property type="project" value="UniProtKB-UniRule"/>
</dbReference>
<dbReference type="FunFam" id="3.40.50.20:FF:000022">
    <property type="entry name" value="Formate-dependent phosphoribosylglycinamide formyltransferase"/>
    <property type="match status" value="1"/>
</dbReference>
<dbReference type="Gene3D" id="3.40.50.20">
    <property type="match status" value="1"/>
</dbReference>
<dbReference type="Gene3D" id="3.30.1490.20">
    <property type="entry name" value="ATP-grasp fold, A domain"/>
    <property type="match status" value="1"/>
</dbReference>
<dbReference type="Gene3D" id="3.30.470.20">
    <property type="entry name" value="ATP-grasp fold, B domain"/>
    <property type="match status" value="1"/>
</dbReference>
<dbReference type="HAMAP" id="MF_01643">
    <property type="entry name" value="PurT"/>
    <property type="match status" value="1"/>
</dbReference>
<dbReference type="InterPro" id="IPR011761">
    <property type="entry name" value="ATP-grasp"/>
</dbReference>
<dbReference type="InterPro" id="IPR003135">
    <property type="entry name" value="ATP-grasp_carboxylate-amine"/>
</dbReference>
<dbReference type="InterPro" id="IPR013815">
    <property type="entry name" value="ATP_grasp_subdomain_1"/>
</dbReference>
<dbReference type="InterPro" id="IPR016185">
    <property type="entry name" value="PreATP-grasp_dom_sf"/>
</dbReference>
<dbReference type="InterPro" id="IPR005862">
    <property type="entry name" value="PurT"/>
</dbReference>
<dbReference type="InterPro" id="IPR054350">
    <property type="entry name" value="PurT/PurK_preATP-grasp"/>
</dbReference>
<dbReference type="InterPro" id="IPR048740">
    <property type="entry name" value="PurT_C"/>
</dbReference>
<dbReference type="InterPro" id="IPR011054">
    <property type="entry name" value="Rudment_hybrid_motif"/>
</dbReference>
<dbReference type="NCBIfam" id="NF006766">
    <property type="entry name" value="PRK09288.1"/>
    <property type="match status" value="1"/>
</dbReference>
<dbReference type="NCBIfam" id="TIGR01142">
    <property type="entry name" value="purT"/>
    <property type="match status" value="1"/>
</dbReference>
<dbReference type="PANTHER" id="PTHR43055">
    <property type="entry name" value="FORMATE-DEPENDENT PHOSPHORIBOSYLGLYCINAMIDE FORMYLTRANSFERASE"/>
    <property type="match status" value="1"/>
</dbReference>
<dbReference type="PANTHER" id="PTHR43055:SF1">
    <property type="entry name" value="FORMATE-DEPENDENT PHOSPHORIBOSYLGLYCINAMIDE FORMYLTRANSFERASE"/>
    <property type="match status" value="1"/>
</dbReference>
<dbReference type="Pfam" id="PF02222">
    <property type="entry name" value="ATP-grasp"/>
    <property type="match status" value="1"/>
</dbReference>
<dbReference type="Pfam" id="PF21244">
    <property type="entry name" value="PurT_C"/>
    <property type="match status" value="1"/>
</dbReference>
<dbReference type="Pfam" id="PF22660">
    <property type="entry name" value="RS_preATP-grasp-like"/>
    <property type="match status" value="1"/>
</dbReference>
<dbReference type="SUPFAM" id="SSF56059">
    <property type="entry name" value="Glutathione synthetase ATP-binding domain-like"/>
    <property type="match status" value="1"/>
</dbReference>
<dbReference type="SUPFAM" id="SSF52440">
    <property type="entry name" value="PreATP-grasp domain"/>
    <property type="match status" value="1"/>
</dbReference>
<dbReference type="SUPFAM" id="SSF51246">
    <property type="entry name" value="Rudiment single hybrid motif"/>
    <property type="match status" value="1"/>
</dbReference>
<dbReference type="PROSITE" id="PS50975">
    <property type="entry name" value="ATP_GRASP"/>
    <property type="match status" value="1"/>
</dbReference>
<keyword id="KW-0067">ATP-binding</keyword>
<keyword id="KW-0436">Ligase</keyword>
<keyword id="KW-0460">Magnesium</keyword>
<keyword id="KW-0479">Metal-binding</keyword>
<keyword id="KW-0547">Nucleotide-binding</keyword>
<keyword id="KW-0658">Purine biosynthesis</keyword>
<protein>
    <recommendedName>
        <fullName evidence="1">Formate-dependent phosphoribosylglycinamide formyltransferase</fullName>
        <ecNumber evidence="1">6.3.1.21</ecNumber>
    </recommendedName>
    <alternativeName>
        <fullName evidence="1">5'-phosphoribosylglycinamide transformylase 2</fullName>
    </alternativeName>
    <alternativeName>
        <fullName evidence="1">Formate-dependent GAR transformylase</fullName>
    </alternativeName>
    <alternativeName>
        <fullName evidence="1">GAR transformylase 2</fullName>
        <shortName evidence="1">GART 2</shortName>
    </alternativeName>
    <alternativeName>
        <fullName evidence="1">Non-folate glycinamide ribonucleotide transformylase</fullName>
    </alternativeName>
    <alternativeName>
        <fullName evidence="1">Phosphoribosylglycinamide formyltransferase 2</fullName>
    </alternativeName>
</protein>
<gene>
    <name evidence="1" type="primary">purT</name>
    <name type="ordered locus">Ava_3022</name>
</gene>
<comment type="function">
    <text evidence="1">Involved in the de novo purine biosynthesis. Catalyzes the transfer of formate to 5-phospho-ribosyl-glycinamide (GAR), producing 5-phospho-ribosyl-N-formylglycinamide (FGAR). Formate is provided by PurU via hydrolysis of 10-formyl-tetrahydrofolate.</text>
</comment>
<comment type="catalytic activity">
    <reaction evidence="1">
        <text>N(1)-(5-phospho-beta-D-ribosyl)glycinamide + formate + ATP = N(2)-formyl-N(1)-(5-phospho-beta-D-ribosyl)glycinamide + ADP + phosphate + H(+)</text>
        <dbReference type="Rhea" id="RHEA:24829"/>
        <dbReference type="ChEBI" id="CHEBI:15378"/>
        <dbReference type="ChEBI" id="CHEBI:15740"/>
        <dbReference type="ChEBI" id="CHEBI:30616"/>
        <dbReference type="ChEBI" id="CHEBI:43474"/>
        <dbReference type="ChEBI" id="CHEBI:143788"/>
        <dbReference type="ChEBI" id="CHEBI:147286"/>
        <dbReference type="ChEBI" id="CHEBI:456216"/>
        <dbReference type="EC" id="6.3.1.21"/>
    </reaction>
    <physiologicalReaction direction="left-to-right" evidence="1">
        <dbReference type="Rhea" id="RHEA:24830"/>
    </physiologicalReaction>
</comment>
<comment type="pathway">
    <text evidence="1">Purine metabolism; IMP biosynthesis via de novo pathway; N(2)-formyl-N(1)-(5-phospho-D-ribosyl)glycinamide from N(1)-(5-phospho-D-ribosyl)glycinamide (formate route): step 1/1.</text>
</comment>
<comment type="subunit">
    <text evidence="1">Homodimer.</text>
</comment>
<comment type="similarity">
    <text evidence="1">Belongs to the PurK/PurT family.</text>
</comment>
<proteinExistence type="inferred from homology"/>
<feature type="chain" id="PRO_0000319120" description="Formate-dependent phosphoribosylglycinamide formyltransferase">
    <location>
        <begin position="1"/>
        <end position="391"/>
    </location>
</feature>
<feature type="domain" description="ATP-grasp" evidence="1">
    <location>
        <begin position="115"/>
        <end position="305"/>
    </location>
</feature>
<feature type="binding site" evidence="1">
    <location>
        <begin position="18"/>
        <end position="19"/>
    </location>
    <ligand>
        <name>N(1)-(5-phospho-beta-D-ribosyl)glycinamide</name>
        <dbReference type="ChEBI" id="CHEBI:143788"/>
    </ligand>
</feature>
<feature type="binding site" evidence="1">
    <location>
        <position position="78"/>
    </location>
    <ligand>
        <name>N(1)-(5-phospho-beta-D-ribosyl)glycinamide</name>
        <dbReference type="ChEBI" id="CHEBI:143788"/>
    </ligand>
</feature>
<feature type="binding site" evidence="1">
    <location>
        <position position="110"/>
    </location>
    <ligand>
        <name>ATP</name>
        <dbReference type="ChEBI" id="CHEBI:30616"/>
    </ligand>
</feature>
<feature type="binding site" evidence="1">
    <location>
        <position position="151"/>
    </location>
    <ligand>
        <name>ATP</name>
        <dbReference type="ChEBI" id="CHEBI:30616"/>
    </ligand>
</feature>
<feature type="binding site" evidence="1">
    <location>
        <begin position="156"/>
        <end position="161"/>
    </location>
    <ligand>
        <name>ATP</name>
        <dbReference type="ChEBI" id="CHEBI:30616"/>
    </ligand>
</feature>
<feature type="binding site" evidence="1">
    <location>
        <begin position="191"/>
        <end position="194"/>
    </location>
    <ligand>
        <name>ATP</name>
        <dbReference type="ChEBI" id="CHEBI:30616"/>
    </ligand>
</feature>
<feature type="binding site" evidence="1">
    <location>
        <position position="199"/>
    </location>
    <ligand>
        <name>ATP</name>
        <dbReference type="ChEBI" id="CHEBI:30616"/>
    </ligand>
</feature>
<feature type="binding site" evidence="1">
    <location>
        <position position="264"/>
    </location>
    <ligand>
        <name>Mg(2+)</name>
        <dbReference type="ChEBI" id="CHEBI:18420"/>
    </ligand>
</feature>
<feature type="binding site" evidence="1">
    <location>
        <position position="276"/>
    </location>
    <ligand>
        <name>Mg(2+)</name>
        <dbReference type="ChEBI" id="CHEBI:18420"/>
    </ligand>
</feature>
<feature type="binding site" evidence="1">
    <location>
        <position position="283"/>
    </location>
    <ligand>
        <name>N(1)-(5-phospho-beta-D-ribosyl)glycinamide</name>
        <dbReference type="ChEBI" id="CHEBI:143788"/>
    </ligand>
</feature>
<feature type="binding site" evidence="1">
    <location>
        <position position="353"/>
    </location>
    <ligand>
        <name>N(1)-(5-phospho-beta-D-ribosyl)glycinamide</name>
        <dbReference type="ChEBI" id="CHEBI:143788"/>
    </ligand>
</feature>
<feature type="binding site" evidence="1">
    <location>
        <begin position="360"/>
        <end position="361"/>
    </location>
    <ligand>
        <name>N(1)-(5-phospho-beta-D-ribosyl)glycinamide</name>
        <dbReference type="ChEBI" id="CHEBI:143788"/>
    </ligand>
</feature>
<accession>Q3M8Q4</accession>
<evidence type="ECO:0000255" key="1">
    <source>
        <dbReference type="HAMAP-Rule" id="MF_01643"/>
    </source>
</evidence>